<accession>Q96KR4</accession>
<accession>B3LDG9</accession>
<accession>B3LDH0</accession>
<accession>C9J796</accession>
<accession>F8WB28</accession>
<accession>Q96KR5</accession>
<sequence>MAAEWGGGVGYSGSGPGRSRWRWSGSVWVRSVLLLLGGLRASATSTPVSLGSSPPCRHHVPSDTEVINKVHLKANHVVKRDVDEHLRIKTVYDKSVEELLPEKKNLVKNKLFPQAISYLEKTFQVRRPAGTILLSRQCATNQYLRKENDPHRYCTGECAAHTKCGPVIVPEEHLQQCRVYRGGKWPHGAVGVPDQEGISDADFVLYVGALATERCSHENIISYAAYCQQEANMDRPIAGYANLCPNMISTQPQEFVGMLSTVKHEVIHALGFSAGLFAFYHDKDGNPLTSRFADGLPPFNYSLGLYQWSDKVVRKVERLWDVRDNKIVRHTVYLLVTPRVVEEARKHFDCPVLEGMELENQGGVGTELNHWEKRLLENEAMTGSHTQNRVLSRITLALMEDTGRQMLSPYCDTLRSNPLQLTCRQDQRAVAVCNLQKFPKPLPQEYQYFDELSGIPAEDLPYYGGSVEIADYCPFSQEFSWHLSGEYQRSSDCRILENQPEIFKNYGAEKYGPHSVCLIQKSAFVMEKCERKLSYPDWGSGCYQVSCSPQGLKVWVQDTSYLCSRAGQVLPVSIQMNGWIHDGNLLCPSCWDFCELCPPETDPPATNLTRALPLDLCSCSSSLVVTLWLLLGNLFPLLAGFLLCIWH</sequence>
<gene>
    <name type="primary">LMLN</name>
</gene>
<comment type="function">
    <text evidence="2">Metalloprotease.</text>
</comment>
<comment type="cofactor">
    <cofactor evidence="1">
        <name>Zn(2+)</name>
        <dbReference type="ChEBI" id="CHEBI:29105"/>
    </cofactor>
    <text evidence="1">Binds 1 zinc ion per subunit.</text>
</comment>
<comment type="subcellular location">
    <subcellularLocation>
        <location evidence="4">Cytoplasm</location>
    </subcellularLocation>
    <subcellularLocation>
        <location evidence="5">Lipid droplet</location>
    </subcellularLocation>
    <text evidence="5">Found in ring-like structures resembling invadopodia. In migrating cells it relocalizes from internal structures to the leading edge of cells.</text>
</comment>
<comment type="alternative products">
    <event type="alternative splicing"/>
    <isoform>
        <id>Q96KR4-1</id>
        <name>1</name>
        <sequence type="displayed"/>
    </isoform>
    <isoform>
        <id>Q96KR4-2</id>
        <name>2</name>
        <sequence type="described" ref="VSP_028002 VSP_028003"/>
    </isoform>
    <isoform>
        <id>Q96KR4-3</id>
        <name>3</name>
        <sequence type="described" ref="VSP_028003"/>
    </isoform>
</comment>
<comment type="tissue specificity">
    <text evidence="5">Expressed in all cell lines analyzed.</text>
</comment>
<comment type="similarity">
    <text evidence="8">Belongs to the peptidase M8 family.</text>
</comment>
<comment type="sequence caution" evidence="8">
    <conflict type="erroneous initiation">
        <sequence resource="EMBL-CDS" id="CAC42883"/>
    </conflict>
    <text>Extended N-terminus.</text>
</comment>
<comment type="sequence caution" evidence="8">
    <conflict type="erroneous initiation">
        <sequence resource="EMBL-CDS" id="CAP49203"/>
    </conflict>
    <text>Extended N-terminus.</text>
</comment>
<name>LMLN_HUMAN</name>
<organism>
    <name type="scientific">Homo sapiens</name>
    <name type="common">Human</name>
    <dbReference type="NCBI Taxonomy" id="9606"/>
    <lineage>
        <taxon>Eukaryota</taxon>
        <taxon>Metazoa</taxon>
        <taxon>Chordata</taxon>
        <taxon>Craniata</taxon>
        <taxon>Vertebrata</taxon>
        <taxon>Euteleostomi</taxon>
        <taxon>Mammalia</taxon>
        <taxon>Eutheria</taxon>
        <taxon>Euarchontoglires</taxon>
        <taxon>Primates</taxon>
        <taxon>Haplorrhini</taxon>
        <taxon>Catarrhini</taxon>
        <taxon>Hominidae</taxon>
        <taxon>Homo</taxon>
    </lineage>
</organism>
<feature type="chain" id="PRO_0000303076" description="Leishmanolysin-like peptidase">
    <location>
        <begin position="1"/>
        <end position="647"/>
    </location>
</feature>
<feature type="active site" evidence="3">
    <location>
        <position position="265"/>
    </location>
</feature>
<feature type="binding site" evidence="3">
    <location>
        <position position="264"/>
    </location>
    <ligand>
        <name>Zn(2+)</name>
        <dbReference type="ChEBI" id="CHEBI:29105"/>
        <note>catalytic</note>
    </ligand>
</feature>
<feature type="binding site" evidence="3">
    <location>
        <position position="268"/>
    </location>
    <ligand>
        <name>Zn(2+)</name>
        <dbReference type="ChEBI" id="CHEBI:29105"/>
        <note>catalytic</note>
    </ligand>
</feature>
<feature type="binding site" evidence="3">
    <location>
        <position position="370"/>
    </location>
    <ligand>
        <name>Zn(2+)</name>
        <dbReference type="ChEBI" id="CHEBI:29105"/>
        <note>catalytic</note>
    </ligand>
</feature>
<feature type="splice variant" id="VSP_028002" description="In isoform 2." evidence="6 7">
    <original>MAAEWGGGVGYSGSGPGRSRWRWSGSVWVRSVLLLLGGLRASATSTPVSLGSSPPCRHHVPSDTE</original>
    <variation>MGRRSGLLGLRPGPEPVALER</variation>
    <location>
        <begin position="1"/>
        <end position="65"/>
    </location>
</feature>
<feature type="splice variant" id="VSP_028003" description="In isoform 2 and isoform 3." evidence="6 7">
    <original>G</original>
    <variation>GWYKANYSMAEKLDWGRGMGCDFVRKSCKFWIDQQRQK</variation>
    <location>
        <position position="403"/>
    </location>
</feature>
<feature type="sequence variant" id="VAR_060158" description="In dbSNP:rs7373165.">
    <original>E</original>
    <variation>D</variation>
    <location>
        <position position="98"/>
    </location>
</feature>
<feature type="sequence conflict" description="In Ref. 1; CAP49203/CAP49204 and 2; CAC42882/CAC42883." evidence="8" ref="1 2">
    <original>R</original>
    <variation>K</variation>
    <location>
        <position position="531"/>
    </location>
</feature>
<keyword id="KW-0025">Alternative splicing</keyword>
<keyword id="KW-0131">Cell cycle</keyword>
<keyword id="KW-0132">Cell division</keyword>
<keyword id="KW-0963">Cytoplasm</keyword>
<keyword id="KW-0378">Hydrolase</keyword>
<keyword id="KW-0551">Lipid droplet</keyword>
<keyword id="KW-0479">Metal-binding</keyword>
<keyword id="KW-0482">Metalloprotease</keyword>
<keyword id="KW-0498">Mitosis</keyword>
<keyword id="KW-0645">Protease</keyword>
<keyword id="KW-1267">Proteomics identification</keyword>
<keyword id="KW-1185">Reference proteome</keyword>
<keyword id="KW-0862">Zinc</keyword>
<reference key="1">
    <citation type="journal article" date="2009" name="J. Cell Sci.">
        <title>The conserved metalloprotease invadolysin localizes to the surface of lipid droplets.</title>
        <authorList>
            <person name="Cobbe N."/>
            <person name="Marshall K.M."/>
            <person name="Gururaja Rao S."/>
            <person name="Chang C.W."/>
            <person name="Di Cara F."/>
            <person name="Duca E."/>
            <person name="Vass S."/>
            <person name="Kassan A."/>
            <person name="Heck M.M."/>
        </authorList>
    </citation>
    <scope>NUCLEOTIDE SEQUENCE [MRNA] (ISOFORMS 2 AND 3)</scope>
    <scope>SUBCELLULAR LOCATION</scope>
    <scope>ALTERNATIVE SPLICING</scope>
    <scope>TISSUE SPECIFICITY</scope>
    <source>
        <tissue>Testis</tissue>
    </source>
</reference>
<reference key="2">
    <citation type="submission" date="2001-06" db="EMBL/GenBank/DDBJ databases">
        <title>Cloning and expression of splice variants of leishmanolysin-like protein, a human form of the protozoan leishmanolysin, EC 3.4.24.36.</title>
        <authorList>
            <person name="Chen J.M."/>
            <person name="Fortunato M."/>
            <person name="Barrett A.J."/>
        </authorList>
    </citation>
    <scope>NUCLEOTIDE SEQUENCE [MRNA] (ISOFORMS 1 AND 2)</scope>
    <source>
        <tissue>Colon</tissue>
        <tissue>Testis</tissue>
    </source>
</reference>
<reference key="3">
    <citation type="journal article" date="2006" name="Nature">
        <title>The DNA sequence, annotation and analysis of human chromosome 3.</title>
        <authorList>
            <person name="Muzny D.M."/>
            <person name="Scherer S.E."/>
            <person name="Kaul R."/>
            <person name="Wang J."/>
            <person name="Yu J."/>
            <person name="Sudbrak R."/>
            <person name="Buhay C.J."/>
            <person name="Chen R."/>
            <person name="Cree A."/>
            <person name="Ding Y."/>
            <person name="Dugan-Rocha S."/>
            <person name="Gill R."/>
            <person name="Gunaratne P."/>
            <person name="Harris R.A."/>
            <person name="Hawes A.C."/>
            <person name="Hernandez J."/>
            <person name="Hodgson A.V."/>
            <person name="Hume J."/>
            <person name="Jackson A."/>
            <person name="Khan Z.M."/>
            <person name="Kovar-Smith C."/>
            <person name="Lewis L.R."/>
            <person name="Lozado R.J."/>
            <person name="Metzker M.L."/>
            <person name="Milosavljevic A."/>
            <person name="Miner G.R."/>
            <person name="Morgan M.B."/>
            <person name="Nazareth L.V."/>
            <person name="Scott G."/>
            <person name="Sodergren E."/>
            <person name="Song X.-Z."/>
            <person name="Steffen D."/>
            <person name="Wei S."/>
            <person name="Wheeler D.A."/>
            <person name="Wright M.W."/>
            <person name="Worley K.C."/>
            <person name="Yuan Y."/>
            <person name="Zhang Z."/>
            <person name="Adams C.Q."/>
            <person name="Ansari-Lari M.A."/>
            <person name="Ayele M."/>
            <person name="Brown M.J."/>
            <person name="Chen G."/>
            <person name="Chen Z."/>
            <person name="Clendenning J."/>
            <person name="Clerc-Blankenburg K.P."/>
            <person name="Chen R."/>
            <person name="Chen Z."/>
            <person name="Davis C."/>
            <person name="Delgado O."/>
            <person name="Dinh H.H."/>
            <person name="Dong W."/>
            <person name="Draper H."/>
            <person name="Ernst S."/>
            <person name="Fu G."/>
            <person name="Gonzalez-Garay M.L."/>
            <person name="Garcia D.K."/>
            <person name="Gillett W."/>
            <person name="Gu J."/>
            <person name="Hao B."/>
            <person name="Haugen E."/>
            <person name="Havlak P."/>
            <person name="He X."/>
            <person name="Hennig S."/>
            <person name="Hu S."/>
            <person name="Huang W."/>
            <person name="Jackson L.R."/>
            <person name="Jacob L.S."/>
            <person name="Kelly S.H."/>
            <person name="Kube M."/>
            <person name="Levy R."/>
            <person name="Li Z."/>
            <person name="Liu B."/>
            <person name="Liu J."/>
            <person name="Liu W."/>
            <person name="Lu J."/>
            <person name="Maheshwari M."/>
            <person name="Nguyen B.-V."/>
            <person name="Okwuonu G.O."/>
            <person name="Palmeiri A."/>
            <person name="Pasternak S."/>
            <person name="Perez L.M."/>
            <person name="Phelps K.A."/>
            <person name="Plopper F.J."/>
            <person name="Qiang B."/>
            <person name="Raymond C."/>
            <person name="Rodriguez R."/>
            <person name="Saenphimmachak C."/>
            <person name="Santibanez J."/>
            <person name="Shen H."/>
            <person name="Shen Y."/>
            <person name="Subramanian S."/>
            <person name="Tabor P.E."/>
            <person name="Verduzco D."/>
            <person name="Waldron L."/>
            <person name="Wang J."/>
            <person name="Wang J."/>
            <person name="Wang Q."/>
            <person name="Williams G.A."/>
            <person name="Wong G.K.-S."/>
            <person name="Yao Z."/>
            <person name="Zhang J."/>
            <person name="Zhang X."/>
            <person name="Zhao G."/>
            <person name="Zhou J."/>
            <person name="Zhou Y."/>
            <person name="Nelson D."/>
            <person name="Lehrach H."/>
            <person name="Reinhardt R."/>
            <person name="Naylor S.L."/>
            <person name="Yang H."/>
            <person name="Olson M."/>
            <person name="Weinstock G."/>
            <person name="Gibbs R.A."/>
        </authorList>
    </citation>
    <scope>NUCLEOTIDE SEQUENCE [LARGE SCALE GENOMIC DNA]</scope>
</reference>
<reference key="4">
    <citation type="journal article" date="2004" name="J. Cell Biol.">
        <title>Invadolysin: a novel, conserved metalloprotease links mitotic structural rearrangements with cell migration.</title>
        <authorList>
            <person name="McHugh B."/>
            <person name="Krause S.A."/>
            <person name="Yu B."/>
            <person name="Deans A.M."/>
            <person name="Heasman S."/>
            <person name="McLaughlin P."/>
            <person name="Heck M.M."/>
        </authorList>
    </citation>
    <scope>SUBCELLULAR LOCATION</scope>
</reference>
<proteinExistence type="evidence at protein level"/>
<evidence type="ECO:0000250" key="1">
    <source>
        <dbReference type="UniProtKB" id="P08148"/>
    </source>
</evidence>
<evidence type="ECO:0000250" key="2">
    <source>
        <dbReference type="UniProtKB" id="Q9VH19"/>
    </source>
</evidence>
<evidence type="ECO:0000255" key="3">
    <source>
        <dbReference type="PROSITE-ProRule" id="PRU10095"/>
    </source>
</evidence>
<evidence type="ECO:0000269" key="4">
    <source>
    </source>
</evidence>
<evidence type="ECO:0000269" key="5">
    <source>
    </source>
</evidence>
<evidence type="ECO:0000303" key="6">
    <source>
    </source>
</evidence>
<evidence type="ECO:0000303" key="7">
    <source ref="2"/>
</evidence>
<evidence type="ECO:0000305" key="8"/>
<dbReference type="EC" id="3.4.24.-" evidence="2"/>
<dbReference type="EMBL" id="AM920777">
    <property type="protein sequence ID" value="CAP49203.1"/>
    <property type="status" value="ALT_INIT"/>
    <property type="molecule type" value="mRNA"/>
</dbReference>
<dbReference type="EMBL" id="AM920778">
    <property type="protein sequence ID" value="CAP49204.1"/>
    <property type="molecule type" value="mRNA"/>
</dbReference>
<dbReference type="EMBL" id="AJ312398">
    <property type="protein sequence ID" value="CAC42882.1"/>
    <property type="molecule type" value="mRNA"/>
</dbReference>
<dbReference type="EMBL" id="AJ312399">
    <property type="protein sequence ID" value="CAC42883.1"/>
    <property type="status" value="ALT_INIT"/>
    <property type="molecule type" value="mRNA"/>
</dbReference>
<dbReference type="EMBL" id="AC135893">
    <property type="status" value="NOT_ANNOTATED_CDS"/>
    <property type="molecule type" value="Genomic_DNA"/>
</dbReference>
<dbReference type="CCDS" id="CCDS3332.2">
    <molecule id="Q96KR4-1"/>
</dbReference>
<dbReference type="CCDS" id="CCDS46988.2">
    <molecule id="Q96KR4-3"/>
</dbReference>
<dbReference type="RefSeq" id="NP_001129521.3">
    <molecule id="Q96KR4-3"/>
    <property type="nucleotide sequence ID" value="NM_001136049.3"/>
</dbReference>
<dbReference type="RefSeq" id="NP_149018.3">
    <molecule id="Q96KR4-1"/>
    <property type="nucleotide sequence ID" value="NM_033029.4"/>
</dbReference>
<dbReference type="BioGRID" id="124601">
    <property type="interactions" value="34"/>
</dbReference>
<dbReference type="FunCoup" id="Q96KR4">
    <property type="interactions" value="1036"/>
</dbReference>
<dbReference type="IntAct" id="Q96KR4">
    <property type="interactions" value="23"/>
</dbReference>
<dbReference type="MINT" id="Q96KR4"/>
<dbReference type="STRING" id="9606.ENSP00000410926"/>
<dbReference type="MEROPS" id="M08.003"/>
<dbReference type="GlyGen" id="Q96KR4">
    <property type="glycosylation" value="2 sites"/>
</dbReference>
<dbReference type="PhosphoSitePlus" id="Q96KR4"/>
<dbReference type="BioMuta" id="LMLN"/>
<dbReference type="DMDM" id="296434578"/>
<dbReference type="jPOST" id="Q96KR4"/>
<dbReference type="MassIVE" id="Q96KR4"/>
<dbReference type="PaxDb" id="9606-ENSP00000410926"/>
<dbReference type="PeptideAtlas" id="Q96KR4"/>
<dbReference type="ProteomicsDB" id="30667"/>
<dbReference type="ProteomicsDB" id="77106">
    <molecule id="Q96KR4-1"/>
</dbReference>
<dbReference type="ProteomicsDB" id="77107">
    <molecule id="Q96KR4-2"/>
</dbReference>
<dbReference type="Antibodypedia" id="2701">
    <property type="antibodies" value="22 antibodies from 8 providers"/>
</dbReference>
<dbReference type="DNASU" id="89782"/>
<dbReference type="Ensembl" id="ENST00000330198.8">
    <molecule id="Q96KR4-1"/>
    <property type="protein sequence ID" value="ENSP00000328829.5"/>
    <property type="gene ID" value="ENSG00000185621.11"/>
</dbReference>
<dbReference type="Ensembl" id="ENST00000420910.7">
    <molecule id="Q96KR4-3"/>
    <property type="protein sequence ID" value="ENSP00000410926.3"/>
    <property type="gene ID" value="ENSG00000185621.11"/>
</dbReference>
<dbReference type="GeneID" id="89782"/>
<dbReference type="KEGG" id="hsa:89782"/>
<dbReference type="MANE-Select" id="ENST00000420910.7">
    <molecule id="Q96KR4-3"/>
    <property type="protein sequence ID" value="ENSP00000410926.3"/>
    <property type="RefSeq nucleotide sequence ID" value="NM_001136049.3"/>
    <property type="RefSeq protein sequence ID" value="NP_001129521.3"/>
</dbReference>
<dbReference type="UCSC" id="uc003fyt.4">
    <molecule id="Q96KR4-1"/>
    <property type="organism name" value="human"/>
</dbReference>
<dbReference type="AGR" id="HGNC:15991"/>
<dbReference type="CTD" id="89782"/>
<dbReference type="DisGeNET" id="89782"/>
<dbReference type="GeneCards" id="LMLN"/>
<dbReference type="HGNC" id="HGNC:15991">
    <property type="gene designation" value="LMLN"/>
</dbReference>
<dbReference type="HPA" id="ENSG00000185621">
    <property type="expression patterns" value="Low tissue specificity"/>
</dbReference>
<dbReference type="MIM" id="609380">
    <property type="type" value="gene"/>
</dbReference>
<dbReference type="neXtProt" id="NX_Q96KR4"/>
<dbReference type="OpenTargets" id="ENSG00000185621"/>
<dbReference type="PharmGKB" id="PA30402"/>
<dbReference type="VEuPathDB" id="HostDB:ENSG00000185621"/>
<dbReference type="eggNOG" id="KOG2556">
    <property type="taxonomic scope" value="Eukaryota"/>
</dbReference>
<dbReference type="GeneTree" id="ENSGT00390000008796"/>
<dbReference type="HOGENOM" id="CLU_023820_1_0_1"/>
<dbReference type="InParanoid" id="Q96KR4"/>
<dbReference type="OrthoDB" id="527990at2759"/>
<dbReference type="PAN-GO" id="Q96KR4">
    <property type="GO annotations" value="2 GO annotations based on evolutionary models"/>
</dbReference>
<dbReference type="PhylomeDB" id="Q96KR4"/>
<dbReference type="TreeFam" id="TF315265"/>
<dbReference type="PathwayCommons" id="Q96KR4"/>
<dbReference type="SignaLink" id="Q96KR4"/>
<dbReference type="BioGRID-ORCS" id="89782">
    <property type="hits" value="15 hits in 1159 CRISPR screens"/>
</dbReference>
<dbReference type="ChiTaRS" id="LMLN">
    <property type="organism name" value="human"/>
</dbReference>
<dbReference type="GenomeRNAi" id="89782"/>
<dbReference type="Pharos" id="Q96KR4">
    <property type="development level" value="Tdark"/>
</dbReference>
<dbReference type="PRO" id="PR:Q96KR4"/>
<dbReference type="Proteomes" id="UP000005640">
    <property type="component" value="Chromosome 3"/>
</dbReference>
<dbReference type="RNAct" id="Q96KR4">
    <property type="molecule type" value="protein"/>
</dbReference>
<dbReference type="Bgee" id="ENSG00000185621">
    <property type="expression patterns" value="Expressed in bronchial epithelial cell and 179 other cell types or tissues"/>
</dbReference>
<dbReference type="ExpressionAtlas" id="Q96KR4">
    <property type="expression patterns" value="baseline and differential"/>
</dbReference>
<dbReference type="GO" id="GO:0005737">
    <property type="term" value="C:cytoplasm"/>
    <property type="evidence" value="ECO:0000318"/>
    <property type="project" value="GO_Central"/>
</dbReference>
<dbReference type="GO" id="GO:0005829">
    <property type="term" value="C:cytosol"/>
    <property type="evidence" value="ECO:0000314"/>
    <property type="project" value="HPA"/>
</dbReference>
<dbReference type="GO" id="GO:0005925">
    <property type="term" value="C:focal adhesion"/>
    <property type="evidence" value="ECO:0000314"/>
    <property type="project" value="HPA"/>
</dbReference>
<dbReference type="GO" id="GO:0005811">
    <property type="term" value="C:lipid droplet"/>
    <property type="evidence" value="ECO:0007669"/>
    <property type="project" value="UniProtKB-SubCell"/>
</dbReference>
<dbReference type="GO" id="GO:0016020">
    <property type="term" value="C:membrane"/>
    <property type="evidence" value="ECO:0007669"/>
    <property type="project" value="InterPro"/>
</dbReference>
<dbReference type="GO" id="GO:0046872">
    <property type="term" value="F:metal ion binding"/>
    <property type="evidence" value="ECO:0007669"/>
    <property type="project" value="UniProtKB-KW"/>
</dbReference>
<dbReference type="GO" id="GO:0004222">
    <property type="term" value="F:metalloendopeptidase activity"/>
    <property type="evidence" value="ECO:0007669"/>
    <property type="project" value="InterPro"/>
</dbReference>
<dbReference type="GO" id="GO:0008233">
    <property type="term" value="F:peptidase activity"/>
    <property type="evidence" value="ECO:0000318"/>
    <property type="project" value="GO_Central"/>
</dbReference>
<dbReference type="GO" id="GO:0007155">
    <property type="term" value="P:cell adhesion"/>
    <property type="evidence" value="ECO:0007669"/>
    <property type="project" value="InterPro"/>
</dbReference>
<dbReference type="GO" id="GO:0051301">
    <property type="term" value="P:cell division"/>
    <property type="evidence" value="ECO:0007669"/>
    <property type="project" value="UniProtKB-KW"/>
</dbReference>
<dbReference type="GO" id="GO:0006508">
    <property type="term" value="P:proteolysis"/>
    <property type="evidence" value="ECO:0007669"/>
    <property type="project" value="UniProtKB-KW"/>
</dbReference>
<dbReference type="FunFam" id="2.10.55.10:FF:000001">
    <property type="entry name" value="Leishmanolysin like peptidase"/>
    <property type="match status" value="1"/>
</dbReference>
<dbReference type="FunFam" id="3.10.170.20:FF:000002">
    <property type="entry name" value="Leishmanolysin like peptidase"/>
    <property type="match status" value="1"/>
</dbReference>
<dbReference type="FunFam" id="3.90.132.10:FF:000001">
    <property type="entry name" value="leishmanolysin-like peptidase isoform X2"/>
    <property type="match status" value="1"/>
</dbReference>
<dbReference type="InterPro" id="IPR001577">
    <property type="entry name" value="Peptidase_M8"/>
</dbReference>
<dbReference type="PANTHER" id="PTHR10942">
    <property type="entry name" value="LEISHMANOLYSIN-LIKE PEPTIDASE"/>
    <property type="match status" value="1"/>
</dbReference>
<dbReference type="PANTHER" id="PTHR10942:SF0">
    <property type="entry name" value="LEISHMANOLYSIN-LIKE PEPTIDASE"/>
    <property type="match status" value="1"/>
</dbReference>
<dbReference type="Pfam" id="PF01457">
    <property type="entry name" value="Peptidase_M8"/>
    <property type="match status" value="3"/>
</dbReference>
<protein>
    <recommendedName>
        <fullName evidence="8">Leishmanolysin-like peptidase</fullName>
        <ecNumber evidence="2">3.4.24.-</ecNumber>
    </recommendedName>
    <alternativeName>
        <fullName evidence="6">Invadolysin</fullName>
    </alternativeName>
</protein>